<comment type="function">
    <text evidence="1">Specifically dimethylates two adjacent adenosines (A1518 and A1519) in the loop of a conserved hairpin near the 3'-end of 16S rRNA in the 30S particle. May play a critical role in biogenesis of 30S subunits.</text>
</comment>
<comment type="catalytic activity">
    <reaction evidence="1">
        <text>adenosine(1518)/adenosine(1519) in 16S rRNA + 4 S-adenosyl-L-methionine = N(6)-dimethyladenosine(1518)/N(6)-dimethyladenosine(1519) in 16S rRNA + 4 S-adenosyl-L-homocysteine + 4 H(+)</text>
        <dbReference type="Rhea" id="RHEA:19609"/>
        <dbReference type="Rhea" id="RHEA-COMP:10232"/>
        <dbReference type="Rhea" id="RHEA-COMP:10233"/>
        <dbReference type="ChEBI" id="CHEBI:15378"/>
        <dbReference type="ChEBI" id="CHEBI:57856"/>
        <dbReference type="ChEBI" id="CHEBI:59789"/>
        <dbReference type="ChEBI" id="CHEBI:74411"/>
        <dbReference type="ChEBI" id="CHEBI:74493"/>
        <dbReference type="EC" id="2.1.1.182"/>
    </reaction>
</comment>
<comment type="subcellular location">
    <subcellularLocation>
        <location evidence="1">Cytoplasm</location>
    </subcellularLocation>
</comment>
<comment type="similarity">
    <text evidence="1">Belongs to the class I-like SAM-binding methyltransferase superfamily. rRNA adenine N(6)-methyltransferase family. RsmA subfamily.</text>
</comment>
<feature type="chain" id="PRO_0000257359" description="Ribosomal RNA small subunit methyltransferase A">
    <location>
        <begin position="1"/>
        <end position="298"/>
    </location>
</feature>
<feature type="binding site" evidence="1">
    <location>
        <position position="35"/>
    </location>
    <ligand>
        <name>S-adenosyl-L-methionine</name>
        <dbReference type="ChEBI" id="CHEBI:59789"/>
    </ligand>
</feature>
<feature type="binding site" evidence="1">
    <location>
        <position position="37"/>
    </location>
    <ligand>
        <name>S-adenosyl-L-methionine</name>
        <dbReference type="ChEBI" id="CHEBI:59789"/>
    </ligand>
</feature>
<feature type="binding site" evidence="1">
    <location>
        <position position="62"/>
    </location>
    <ligand>
        <name>S-adenosyl-L-methionine</name>
        <dbReference type="ChEBI" id="CHEBI:59789"/>
    </ligand>
</feature>
<feature type="binding site" evidence="1">
    <location>
        <position position="83"/>
    </location>
    <ligand>
        <name>S-adenosyl-L-methionine</name>
        <dbReference type="ChEBI" id="CHEBI:59789"/>
    </ligand>
</feature>
<feature type="binding site" evidence="1">
    <location>
        <position position="108"/>
    </location>
    <ligand>
        <name>S-adenosyl-L-methionine</name>
        <dbReference type="ChEBI" id="CHEBI:59789"/>
    </ligand>
</feature>
<feature type="binding site" evidence="1">
    <location>
        <position position="133"/>
    </location>
    <ligand>
        <name>S-adenosyl-L-methionine</name>
        <dbReference type="ChEBI" id="CHEBI:59789"/>
    </ligand>
</feature>
<dbReference type="EC" id="2.1.1.182" evidence="1"/>
<dbReference type="EMBL" id="CP000260">
    <property type="protein sequence ID" value="ABF33287.1"/>
    <property type="molecule type" value="Genomic_DNA"/>
</dbReference>
<dbReference type="SMR" id="Q1JIN6"/>
<dbReference type="KEGG" id="sph:MGAS10270_Spy0222"/>
<dbReference type="HOGENOM" id="CLU_041220_0_0_9"/>
<dbReference type="Proteomes" id="UP000002436">
    <property type="component" value="Chromosome"/>
</dbReference>
<dbReference type="GO" id="GO:0005829">
    <property type="term" value="C:cytosol"/>
    <property type="evidence" value="ECO:0007669"/>
    <property type="project" value="TreeGrafter"/>
</dbReference>
<dbReference type="GO" id="GO:0052908">
    <property type="term" value="F:16S rRNA (adenine(1518)-N(6)/adenine(1519)-N(6))-dimethyltransferase activity"/>
    <property type="evidence" value="ECO:0007669"/>
    <property type="project" value="UniProtKB-EC"/>
</dbReference>
<dbReference type="GO" id="GO:0003723">
    <property type="term" value="F:RNA binding"/>
    <property type="evidence" value="ECO:0007669"/>
    <property type="project" value="UniProtKB-KW"/>
</dbReference>
<dbReference type="CDD" id="cd02440">
    <property type="entry name" value="AdoMet_MTases"/>
    <property type="match status" value="1"/>
</dbReference>
<dbReference type="FunFam" id="3.40.50.150:FF:000023">
    <property type="entry name" value="Ribosomal RNA small subunit methyltransferase A"/>
    <property type="match status" value="1"/>
</dbReference>
<dbReference type="Gene3D" id="1.10.8.100">
    <property type="entry name" value="Ribosomal RNA adenine dimethylase-like, domain 2"/>
    <property type="match status" value="1"/>
</dbReference>
<dbReference type="Gene3D" id="3.40.50.150">
    <property type="entry name" value="Vaccinia Virus protein VP39"/>
    <property type="match status" value="1"/>
</dbReference>
<dbReference type="HAMAP" id="MF_00607">
    <property type="entry name" value="16SrRNA_methyltr_A"/>
    <property type="match status" value="1"/>
</dbReference>
<dbReference type="InterPro" id="IPR001737">
    <property type="entry name" value="KsgA/Erm"/>
</dbReference>
<dbReference type="InterPro" id="IPR023165">
    <property type="entry name" value="rRNA_Ade_diMease-like_C"/>
</dbReference>
<dbReference type="InterPro" id="IPR020596">
    <property type="entry name" value="rRNA_Ade_Mease_Trfase_CS"/>
</dbReference>
<dbReference type="InterPro" id="IPR020598">
    <property type="entry name" value="rRNA_Ade_methylase_Trfase_N"/>
</dbReference>
<dbReference type="InterPro" id="IPR011530">
    <property type="entry name" value="rRNA_adenine_dimethylase"/>
</dbReference>
<dbReference type="InterPro" id="IPR029063">
    <property type="entry name" value="SAM-dependent_MTases_sf"/>
</dbReference>
<dbReference type="NCBIfam" id="TIGR00755">
    <property type="entry name" value="ksgA"/>
    <property type="match status" value="1"/>
</dbReference>
<dbReference type="PANTHER" id="PTHR11727">
    <property type="entry name" value="DIMETHYLADENOSINE TRANSFERASE"/>
    <property type="match status" value="1"/>
</dbReference>
<dbReference type="PANTHER" id="PTHR11727:SF7">
    <property type="entry name" value="DIMETHYLADENOSINE TRANSFERASE-RELATED"/>
    <property type="match status" value="1"/>
</dbReference>
<dbReference type="Pfam" id="PF00398">
    <property type="entry name" value="RrnaAD"/>
    <property type="match status" value="1"/>
</dbReference>
<dbReference type="SMART" id="SM00650">
    <property type="entry name" value="rADc"/>
    <property type="match status" value="1"/>
</dbReference>
<dbReference type="SUPFAM" id="SSF53335">
    <property type="entry name" value="S-adenosyl-L-methionine-dependent methyltransferases"/>
    <property type="match status" value="1"/>
</dbReference>
<dbReference type="PROSITE" id="PS01131">
    <property type="entry name" value="RRNA_A_DIMETH"/>
    <property type="match status" value="1"/>
</dbReference>
<dbReference type="PROSITE" id="PS51689">
    <property type="entry name" value="SAM_RNA_A_N6_MT"/>
    <property type="match status" value="1"/>
</dbReference>
<proteinExistence type="inferred from homology"/>
<name>RSMA_STRPD</name>
<reference key="1">
    <citation type="journal article" date="2006" name="Proc. Natl. Acad. Sci. U.S.A.">
        <title>Molecular genetic anatomy of inter- and intraserotype variation in the human bacterial pathogen group A Streptococcus.</title>
        <authorList>
            <person name="Beres S.B."/>
            <person name="Richter E.W."/>
            <person name="Nagiec M.J."/>
            <person name="Sumby P."/>
            <person name="Porcella S.F."/>
            <person name="DeLeo F.R."/>
            <person name="Musser J.M."/>
        </authorList>
    </citation>
    <scope>NUCLEOTIDE SEQUENCE [LARGE SCALE GENOMIC DNA]</scope>
    <source>
        <strain>MGAS10270</strain>
    </source>
</reference>
<evidence type="ECO:0000255" key="1">
    <source>
        <dbReference type="HAMAP-Rule" id="MF_00607"/>
    </source>
</evidence>
<accession>Q1JIN6</accession>
<keyword id="KW-0963">Cytoplasm</keyword>
<keyword id="KW-0489">Methyltransferase</keyword>
<keyword id="KW-0694">RNA-binding</keyword>
<keyword id="KW-0698">rRNA processing</keyword>
<keyword id="KW-0949">S-adenosyl-L-methionine</keyword>
<keyword id="KW-0808">Transferase</keyword>
<protein>
    <recommendedName>
        <fullName evidence="1">Ribosomal RNA small subunit methyltransferase A</fullName>
        <ecNumber evidence="1">2.1.1.182</ecNumber>
    </recommendedName>
    <alternativeName>
        <fullName evidence="1">16S rRNA (adenine(1518)-N(6)/adenine(1519)-N(6))-dimethyltransferase</fullName>
    </alternativeName>
    <alternativeName>
        <fullName evidence="1">16S rRNA dimethyladenosine transferase</fullName>
    </alternativeName>
    <alternativeName>
        <fullName evidence="1">16S rRNA dimethylase</fullName>
    </alternativeName>
    <alternativeName>
        <fullName evidence="1">S-adenosylmethionine-6-N', N'-adenosyl(rRNA) dimethyltransferase</fullName>
    </alternativeName>
</protein>
<sequence>MIIKRREYMRIADYSVTKAVLDRHGFTFKKSFGQNFLTDTNILQKIVDTAEIDQNVNVIEIGPGIGALTEFLAENAAEVMAFEIDDRLVPILADTLRDFDNVQVVNQDILKADLQTQIKQFKNPDLPIKVVANLPYYITTPILMHLIESKIPFQEFVVMMQREVADRISAEPNTKAYGSLSIAVQYYMTAKVAFIVPRTVFVPAPNVDSAILKMVRRDQPLIEVKDEDFFFRVSRLSFVHRRKTLWNNLTSHFGKSEDIKTKLEKGLALADIKPSIRGEALSIQDFGKLADALKEVGL</sequence>
<gene>
    <name evidence="1" type="primary">rsmA</name>
    <name evidence="1" type="synonym">ksgA</name>
    <name type="ordered locus">MGAS10270_Spy0222</name>
</gene>
<organism>
    <name type="scientific">Streptococcus pyogenes serotype M2 (strain MGAS10270)</name>
    <dbReference type="NCBI Taxonomy" id="370552"/>
    <lineage>
        <taxon>Bacteria</taxon>
        <taxon>Bacillati</taxon>
        <taxon>Bacillota</taxon>
        <taxon>Bacilli</taxon>
        <taxon>Lactobacillales</taxon>
        <taxon>Streptococcaceae</taxon>
        <taxon>Streptococcus</taxon>
    </lineage>
</organism>